<comment type="function">
    <text evidence="1">May modulate chromatin structure by regulation of nucleosome assembly/disassembly.</text>
</comment>
<comment type="subcellular location">
    <subcellularLocation>
        <location evidence="4">Nucleus</location>
    </subcellularLocation>
    <subcellularLocation>
        <location evidence="4">Cytoplasm</location>
    </subcellularLocation>
</comment>
<comment type="domain">
    <text>The acidic domain is probably involved in the interaction with histones.</text>
</comment>
<comment type="similarity">
    <text evidence="5">Belongs to the nucleosome assembly protein (NAP) family.</text>
</comment>
<comment type="sequence caution" evidence="5">
    <conflict type="erroneous gene model prediction">
        <sequence resource="EMBL-CDS" id="EAY75575"/>
    </conflict>
</comment>
<sequence>MSNPELSSEKKASLVETLKNKLQALAEQHVDVLESLAPVVRKRVDVLIEIQSQHDELEAKFLEEKSALEAKYHKLYGPLYSKRSEIVSGVLEVEGETEEREEKGVPDFWLKAMKNNEILAEEIHESDEEALKYLKDIKWCRIDDLKGFKFEFFFDTNPFFKNQVLTKTYHMIDEDDEPILEKAIGTEIEWHPGNCLTQEVLTKESLESTKPITKTEEYESFFNFFSPPQVPEDDAKIDENTVEELQNQMERDYDIASTLRDKIIPHAVSWFTGEAVQDEDYGASWVDDEEDDDDEYSDEEA</sequence>
<organism>
    <name type="scientific">Oryza sativa subsp. indica</name>
    <name type="common">Rice</name>
    <dbReference type="NCBI Taxonomy" id="39946"/>
    <lineage>
        <taxon>Eukaryota</taxon>
        <taxon>Viridiplantae</taxon>
        <taxon>Streptophyta</taxon>
        <taxon>Embryophyta</taxon>
        <taxon>Tracheophyta</taxon>
        <taxon>Spermatophyta</taxon>
        <taxon>Magnoliopsida</taxon>
        <taxon>Liliopsida</taxon>
        <taxon>Poales</taxon>
        <taxon>Poaceae</taxon>
        <taxon>BOP clade</taxon>
        <taxon>Oryzoideae</taxon>
        <taxon>Oryzeae</taxon>
        <taxon>Oryzinae</taxon>
        <taxon>Oryza</taxon>
        <taxon>Oryza sativa</taxon>
    </lineage>
</organism>
<reference key="1">
    <citation type="journal article" date="2005" name="Plant Physiol.">
        <title>Interacting proteins and differences in nuclear transport reveal specific functions for the NAP1 family proteins in plants.</title>
        <authorList>
            <person name="Dong A."/>
            <person name="Liu Z."/>
            <person name="Zhu Y."/>
            <person name="Yu F."/>
            <person name="Li Z."/>
            <person name="Cao K."/>
            <person name="Shen W.H."/>
        </authorList>
    </citation>
    <scope>NUCLEOTIDE SEQUENCE [MRNA]</scope>
    <scope>SUBCELLULAR LOCATION</scope>
    <scope>PHOSPHORYLATION AT SER-297</scope>
    <scope>MUTAGENESIS OF SER-297</scope>
</reference>
<reference key="2">
    <citation type="journal article" date="2005" name="PLoS Biol.">
        <title>The genomes of Oryza sativa: a history of duplications.</title>
        <authorList>
            <person name="Yu J."/>
            <person name="Wang J."/>
            <person name="Lin W."/>
            <person name="Li S."/>
            <person name="Li H."/>
            <person name="Zhou J."/>
            <person name="Ni P."/>
            <person name="Dong W."/>
            <person name="Hu S."/>
            <person name="Zeng C."/>
            <person name="Zhang J."/>
            <person name="Zhang Y."/>
            <person name="Li R."/>
            <person name="Xu Z."/>
            <person name="Li S."/>
            <person name="Li X."/>
            <person name="Zheng H."/>
            <person name="Cong L."/>
            <person name="Lin L."/>
            <person name="Yin J."/>
            <person name="Geng J."/>
            <person name="Li G."/>
            <person name="Shi J."/>
            <person name="Liu J."/>
            <person name="Lv H."/>
            <person name="Li J."/>
            <person name="Wang J."/>
            <person name="Deng Y."/>
            <person name="Ran L."/>
            <person name="Shi X."/>
            <person name="Wang X."/>
            <person name="Wu Q."/>
            <person name="Li C."/>
            <person name="Ren X."/>
            <person name="Wang J."/>
            <person name="Wang X."/>
            <person name="Li D."/>
            <person name="Liu D."/>
            <person name="Zhang X."/>
            <person name="Ji Z."/>
            <person name="Zhao W."/>
            <person name="Sun Y."/>
            <person name="Zhang Z."/>
            <person name="Bao J."/>
            <person name="Han Y."/>
            <person name="Dong L."/>
            <person name="Ji J."/>
            <person name="Chen P."/>
            <person name="Wu S."/>
            <person name="Liu J."/>
            <person name="Xiao Y."/>
            <person name="Bu D."/>
            <person name="Tan J."/>
            <person name="Yang L."/>
            <person name="Ye C."/>
            <person name="Zhang J."/>
            <person name="Xu J."/>
            <person name="Zhou Y."/>
            <person name="Yu Y."/>
            <person name="Zhang B."/>
            <person name="Zhuang S."/>
            <person name="Wei H."/>
            <person name="Liu B."/>
            <person name="Lei M."/>
            <person name="Yu H."/>
            <person name="Li Y."/>
            <person name="Xu H."/>
            <person name="Wei S."/>
            <person name="He X."/>
            <person name="Fang L."/>
            <person name="Zhang Z."/>
            <person name="Zhang Y."/>
            <person name="Huang X."/>
            <person name="Su Z."/>
            <person name="Tong W."/>
            <person name="Li J."/>
            <person name="Tong Z."/>
            <person name="Li S."/>
            <person name="Ye J."/>
            <person name="Wang L."/>
            <person name="Fang L."/>
            <person name="Lei T."/>
            <person name="Chen C.-S."/>
            <person name="Chen H.-C."/>
            <person name="Xu Z."/>
            <person name="Li H."/>
            <person name="Huang H."/>
            <person name="Zhang F."/>
            <person name="Xu H."/>
            <person name="Li N."/>
            <person name="Zhao C."/>
            <person name="Li S."/>
            <person name="Dong L."/>
            <person name="Huang Y."/>
            <person name="Li L."/>
            <person name="Xi Y."/>
            <person name="Qi Q."/>
            <person name="Li W."/>
            <person name="Zhang B."/>
            <person name="Hu W."/>
            <person name="Zhang Y."/>
            <person name="Tian X."/>
            <person name="Jiao Y."/>
            <person name="Liang X."/>
            <person name="Jin J."/>
            <person name="Gao L."/>
            <person name="Zheng W."/>
            <person name="Hao B."/>
            <person name="Liu S.-M."/>
            <person name="Wang W."/>
            <person name="Yuan L."/>
            <person name="Cao M."/>
            <person name="McDermott J."/>
            <person name="Samudrala R."/>
            <person name="Wang J."/>
            <person name="Wong G.K.-S."/>
            <person name="Yang H."/>
        </authorList>
    </citation>
    <scope>NUCLEOTIDE SEQUENCE [LARGE SCALE GENOMIC DNA]</scope>
    <source>
        <strain>cv. 93-11</strain>
    </source>
</reference>
<evidence type="ECO:0000250" key="1"/>
<evidence type="ECO:0000255" key="2"/>
<evidence type="ECO:0000256" key="3">
    <source>
        <dbReference type="SAM" id="MobiDB-lite"/>
    </source>
</evidence>
<evidence type="ECO:0000269" key="4">
    <source>
    </source>
</evidence>
<evidence type="ECO:0000305" key="5"/>
<dbReference type="EMBL" id="AY830122">
    <property type="protein sequence ID" value="AAV88624.1"/>
    <property type="molecule type" value="mRNA"/>
</dbReference>
<dbReference type="EMBL" id="CM000126">
    <property type="protein sequence ID" value="EAY75575.1"/>
    <property type="status" value="ALT_SEQ"/>
    <property type="molecule type" value="Genomic_DNA"/>
</dbReference>
<dbReference type="SMR" id="Q5MGA9"/>
<dbReference type="STRING" id="39946.Q5MGA9"/>
<dbReference type="iPTMnet" id="Q5MGA9"/>
<dbReference type="EnsemblPlants" id="OsIR64_01g0029830.01">
    <property type="protein sequence ID" value="OsIR64_01g0029830.01"/>
    <property type="gene ID" value="OsIR64_01g0029830"/>
</dbReference>
<dbReference type="EnsemblPlants" id="OsKYG_01g0030030.01">
    <property type="protein sequence ID" value="OsKYG_01g0030030.01"/>
    <property type="gene ID" value="OsKYG_01g0030030"/>
</dbReference>
<dbReference type="EnsemblPlants" id="OsLaMu_01g0030250.01">
    <property type="protein sequence ID" value="OsLaMu_01g0030250.01"/>
    <property type="gene ID" value="OsLaMu_01g0030250"/>
</dbReference>
<dbReference type="EnsemblPlants" id="OsLima_01g0030080.01">
    <property type="protein sequence ID" value="OsLima_01g0030080.01"/>
    <property type="gene ID" value="OsLima_01g0030080"/>
</dbReference>
<dbReference type="EnsemblPlants" id="OsMH63_01G030900_01">
    <property type="protein sequence ID" value="OsMH63_01G030900_01"/>
    <property type="gene ID" value="OsMH63_01G030900"/>
</dbReference>
<dbReference type="EnsemblPlants" id="OsPr106_01g0030120.01">
    <property type="protein sequence ID" value="OsPr106_01g0030120.01"/>
    <property type="gene ID" value="OsPr106_01g0030120"/>
</dbReference>
<dbReference type="EnsemblPlants" id="OsZS97_01G030250_01">
    <property type="protein sequence ID" value="OsZS97_01G030250_01"/>
    <property type="gene ID" value="OsZS97_01G030250"/>
</dbReference>
<dbReference type="Gramene" id="OsIR64_01g0029830.01">
    <property type="protein sequence ID" value="OsIR64_01g0029830.01"/>
    <property type="gene ID" value="OsIR64_01g0029830"/>
</dbReference>
<dbReference type="Gramene" id="OsKYG_01g0030030.01">
    <property type="protein sequence ID" value="OsKYG_01g0030030.01"/>
    <property type="gene ID" value="OsKYG_01g0030030"/>
</dbReference>
<dbReference type="Gramene" id="OsLaMu_01g0030250.01">
    <property type="protein sequence ID" value="OsLaMu_01g0030250.01"/>
    <property type="gene ID" value="OsLaMu_01g0030250"/>
</dbReference>
<dbReference type="Gramene" id="OsLima_01g0030080.01">
    <property type="protein sequence ID" value="OsLima_01g0030080.01"/>
    <property type="gene ID" value="OsLima_01g0030080"/>
</dbReference>
<dbReference type="Gramene" id="OsMH63_01G030900_01">
    <property type="protein sequence ID" value="OsMH63_01G030900_01"/>
    <property type="gene ID" value="OsMH63_01G030900"/>
</dbReference>
<dbReference type="Gramene" id="OsPr106_01g0030120.01">
    <property type="protein sequence ID" value="OsPr106_01g0030120.01"/>
    <property type="gene ID" value="OsPr106_01g0030120"/>
</dbReference>
<dbReference type="Gramene" id="OsZS97_01G030250_01">
    <property type="protein sequence ID" value="OsZS97_01G030250_01"/>
    <property type="gene ID" value="OsZS97_01G030250"/>
</dbReference>
<dbReference type="Proteomes" id="UP000007015">
    <property type="component" value="Chromosome 1"/>
</dbReference>
<dbReference type="GO" id="GO:0005737">
    <property type="term" value="C:cytoplasm"/>
    <property type="evidence" value="ECO:0007669"/>
    <property type="project" value="UniProtKB-SubCell"/>
</dbReference>
<dbReference type="GO" id="GO:0005634">
    <property type="term" value="C:nucleus"/>
    <property type="evidence" value="ECO:0007669"/>
    <property type="project" value="UniProtKB-SubCell"/>
</dbReference>
<dbReference type="GO" id="GO:0042393">
    <property type="term" value="F:histone binding"/>
    <property type="evidence" value="ECO:0007669"/>
    <property type="project" value="UniProtKB-ARBA"/>
</dbReference>
<dbReference type="GO" id="GO:0000724">
    <property type="term" value="P:double-strand break repair via homologous recombination"/>
    <property type="evidence" value="ECO:0007669"/>
    <property type="project" value="UniProtKB-ARBA"/>
</dbReference>
<dbReference type="GO" id="GO:0006334">
    <property type="term" value="P:nucleosome assembly"/>
    <property type="evidence" value="ECO:0007669"/>
    <property type="project" value="InterPro"/>
</dbReference>
<dbReference type="FunFam" id="1.20.5.1500:FF:000001">
    <property type="entry name" value="Nucleosome assembly protein 1-like 1"/>
    <property type="match status" value="1"/>
</dbReference>
<dbReference type="FunFam" id="3.30.1120.90:FF:000005">
    <property type="entry name" value="Nucleosome assembly protein11"/>
    <property type="match status" value="1"/>
</dbReference>
<dbReference type="Gene3D" id="1.20.5.1500">
    <property type="match status" value="1"/>
</dbReference>
<dbReference type="Gene3D" id="3.30.1120.90">
    <property type="entry name" value="Nucleosome assembly protein"/>
    <property type="match status" value="1"/>
</dbReference>
<dbReference type="InterPro" id="IPR037231">
    <property type="entry name" value="NAP-like_sf"/>
</dbReference>
<dbReference type="InterPro" id="IPR002164">
    <property type="entry name" value="NAP_family"/>
</dbReference>
<dbReference type="PANTHER" id="PTHR11875">
    <property type="entry name" value="TESTIS-SPECIFIC Y-ENCODED PROTEIN"/>
    <property type="match status" value="1"/>
</dbReference>
<dbReference type="Pfam" id="PF00956">
    <property type="entry name" value="NAP"/>
    <property type="match status" value="1"/>
</dbReference>
<dbReference type="SUPFAM" id="SSF143113">
    <property type="entry name" value="NAP-like"/>
    <property type="match status" value="1"/>
</dbReference>
<feature type="chain" id="PRO_0000423691" description="Nucleosome assembly protein 1;3">
    <location>
        <begin position="1"/>
        <end position="301"/>
    </location>
</feature>
<feature type="region of interest" description="Disordered" evidence="3">
    <location>
        <begin position="279"/>
        <end position="301"/>
    </location>
</feature>
<feature type="coiled-coil region" evidence="2">
    <location>
        <begin position="15"/>
        <end position="69"/>
    </location>
</feature>
<feature type="short sequence motif" description="Nuclear export signal" evidence="2">
    <location>
        <begin position="36"/>
        <end position="51"/>
    </location>
</feature>
<feature type="modified residue" description="Phosphoserine; by CK2" evidence="4">
    <location>
        <position position="297"/>
    </location>
</feature>
<feature type="mutagenesis site" description="Abolishes phosphorylation by CK2." evidence="4">
    <original>S</original>
    <variation>A</variation>
    <location>
        <position position="297"/>
    </location>
</feature>
<feature type="sequence conflict" description="In Ref. 1; AAV88624." evidence="5" ref="1">
    <original>S</original>
    <variation>L</variation>
    <location>
        <position position="7"/>
    </location>
</feature>
<accession>Q5MGA9</accession>
<accession>A2WUC9</accession>
<keyword id="KW-0143">Chaperone</keyword>
<keyword id="KW-0175">Coiled coil</keyword>
<keyword id="KW-0963">Cytoplasm</keyword>
<keyword id="KW-0539">Nucleus</keyword>
<keyword id="KW-0597">Phosphoprotein</keyword>
<keyword id="KW-1185">Reference proteome</keyword>
<protein>
    <recommendedName>
        <fullName>Nucleosome assembly protein 1;3</fullName>
        <shortName>OsNAP1;3</shortName>
    </recommendedName>
    <alternativeName>
        <fullName>Nucleosome assembly protein 1-like 3</fullName>
        <shortName>OsNAP1_L3</shortName>
    </alternativeName>
</protein>
<name>NAP1C_ORYSI</name>
<gene>
    <name type="primary">NAP1;3</name>
    <name type="synonym">NAP1_L3</name>
    <name type="ORF">OsI_03479</name>
</gene>
<proteinExistence type="evidence at protein level"/>